<evidence type="ECO:0000250" key="1"/>
<evidence type="ECO:0000250" key="2">
    <source>
        <dbReference type="UniProtKB" id="O14950"/>
    </source>
</evidence>
<evidence type="ECO:0000255" key="3">
    <source>
        <dbReference type="PROSITE-ProRule" id="PRU00448"/>
    </source>
</evidence>
<evidence type="ECO:0000256" key="4">
    <source>
        <dbReference type="SAM" id="MobiDB-lite"/>
    </source>
</evidence>
<evidence type="ECO:0000269" key="5">
    <source>
    </source>
</evidence>
<evidence type="ECO:0000305" key="6"/>
<proteinExistence type="evidence at protein level"/>
<feature type="chain" id="PRO_0000284383" description="Myosin regulatory light chain 12B">
    <location>
        <begin position="1"/>
        <end position="172"/>
    </location>
</feature>
<feature type="domain" description="EF-hand 1" evidence="3">
    <location>
        <begin position="29"/>
        <end position="64"/>
    </location>
</feature>
<feature type="domain" description="EF-hand 2" evidence="3">
    <location>
        <begin position="98"/>
        <end position="133"/>
    </location>
</feature>
<feature type="domain" description="EF-hand 3" evidence="3">
    <location>
        <begin position="134"/>
        <end position="169"/>
    </location>
</feature>
<feature type="region of interest" description="Disordered" evidence="4">
    <location>
        <begin position="1"/>
        <end position="20"/>
    </location>
</feature>
<feature type="compositionally biased region" description="Basic residues" evidence="4">
    <location>
        <begin position="1"/>
        <end position="16"/>
    </location>
</feature>
<feature type="binding site" evidence="3">
    <location>
        <position position="42"/>
    </location>
    <ligand>
        <name>Ca(2+)</name>
        <dbReference type="ChEBI" id="CHEBI:29108"/>
    </ligand>
</feature>
<feature type="binding site" evidence="3">
    <location>
        <position position="44"/>
    </location>
    <ligand>
        <name>Ca(2+)</name>
        <dbReference type="ChEBI" id="CHEBI:29108"/>
    </ligand>
</feature>
<feature type="binding site" evidence="3">
    <location>
        <position position="46"/>
    </location>
    <ligand>
        <name>Ca(2+)</name>
        <dbReference type="ChEBI" id="CHEBI:29108"/>
    </ligand>
</feature>
<feature type="binding site" evidence="3">
    <location>
        <position position="53"/>
    </location>
    <ligand>
        <name>Ca(2+)</name>
        <dbReference type="ChEBI" id="CHEBI:29108"/>
    </ligand>
</feature>
<feature type="modified residue" description="Phosphothreonine; by MLCK and ZIPK/DAPK3" evidence="2">
    <location>
        <position position="19"/>
    </location>
</feature>
<feature type="modified residue" description="Phosphoserine; by MLCK and ZIPK/DAPK3" evidence="2">
    <location>
        <position position="20"/>
    </location>
</feature>
<feature type="sequence conflict" description="In Ref. 1; BAE40255." evidence="6" ref="1">
    <original>R</original>
    <variation>Q</variation>
    <location>
        <position position="45"/>
    </location>
</feature>
<feature type="sequence conflict" description="In Ref. 1; BAE35646." evidence="6" ref="1">
    <original>G</original>
    <variation>A</variation>
    <location>
        <position position="79"/>
    </location>
</feature>
<feature type="sequence conflict" description="In Ref. 1; BAE35646." evidence="6" ref="1">
    <original>F</original>
    <variation>V</variation>
    <location>
        <position position="159"/>
    </location>
</feature>
<name>ML12B_MOUSE</name>
<sequence length="172" mass="19779">MSSKKAKTKTTKKRPQRATSNVFAMFDQSQIQEFKEAFNMIDQNRDGFIDKEDLHDMLASLGKNPTDAYLDAMMNEAPGPINFTMFLTMFGEKLNGTDPEDVIRNAFACFDEEATGTIQEDYLRELLTTMGDRFTDEEVDELYREAPIDKKGNFNYIEFTRILKHGAKDKDD</sequence>
<keyword id="KW-0106">Calcium</keyword>
<keyword id="KW-0903">Direct protein sequencing</keyword>
<keyword id="KW-0479">Metal-binding</keyword>
<keyword id="KW-0505">Motor protein</keyword>
<keyword id="KW-0514">Muscle protein</keyword>
<keyword id="KW-0518">Myosin</keyword>
<keyword id="KW-0597">Phosphoprotein</keyword>
<keyword id="KW-1185">Reference proteome</keyword>
<keyword id="KW-0677">Repeat</keyword>
<gene>
    <name type="primary">Myl12b</name>
    <name type="synonym">Mrlc2</name>
    <name type="synonym">Mylc2b</name>
</gene>
<comment type="function">
    <text evidence="2">Myosin regulatory subunit that plays an important role in regulation of both smooth muscle and nonmuscle cell contractile activity via its phosphorylation. Phosphorylation triggers actin polymerization in vascular smooth muscle. Implicated in cytokinesis, receptor capping, and cell locomotion.</text>
</comment>
<comment type="subunit">
    <text evidence="5">Myosin is a hexamer of 2 heavy chains and 4 light chains: interacts with myosin heavy chain MYO19.</text>
</comment>
<comment type="PTM">
    <text evidence="2">Phosphorylation increases the actin-activated myosin ATPase activity and thereby regulates the contractile activity. It is required to generate the driving force in the migration of the cells but not necessary for localization of myosin-2 at the leading edge. Phosphorylation is reduced following epigallocatechin-3-O-gallate treatment.</text>
</comment>
<comment type="miscellaneous">
    <text evidence="1">This chain binds calcium.</text>
</comment>
<comment type="sequence caution" evidence="6">
    <conflict type="frameshift">
        <sequence resource="EMBL-CDS" id="BAE35646"/>
    </conflict>
</comment>
<protein>
    <recommendedName>
        <fullName>Myosin regulatory light chain 12B</fullName>
    </recommendedName>
    <alternativeName>
        <fullName>Myosin regulatory light chain 2-B, smooth muscle isoform</fullName>
    </alternativeName>
    <alternativeName>
        <fullName>Myosin regulatory light chain 20 kDa</fullName>
        <shortName>MLC20</shortName>
    </alternativeName>
    <alternativeName>
        <fullName>Myosin regulatory light chain MRLC2</fullName>
    </alternativeName>
</protein>
<accession>Q3THE2</accession>
<accession>Q3TVH2</accession>
<accession>Q9CQL8</accession>
<reference key="1">
    <citation type="journal article" date="2005" name="Science">
        <title>The transcriptional landscape of the mammalian genome.</title>
        <authorList>
            <person name="Carninci P."/>
            <person name="Kasukawa T."/>
            <person name="Katayama S."/>
            <person name="Gough J."/>
            <person name="Frith M.C."/>
            <person name="Maeda N."/>
            <person name="Oyama R."/>
            <person name="Ravasi T."/>
            <person name="Lenhard B."/>
            <person name="Wells C."/>
            <person name="Kodzius R."/>
            <person name="Shimokawa K."/>
            <person name="Bajic V.B."/>
            <person name="Brenner S.E."/>
            <person name="Batalov S."/>
            <person name="Forrest A.R."/>
            <person name="Zavolan M."/>
            <person name="Davis M.J."/>
            <person name="Wilming L.G."/>
            <person name="Aidinis V."/>
            <person name="Allen J.E."/>
            <person name="Ambesi-Impiombato A."/>
            <person name="Apweiler R."/>
            <person name="Aturaliya R.N."/>
            <person name="Bailey T.L."/>
            <person name="Bansal M."/>
            <person name="Baxter L."/>
            <person name="Beisel K.W."/>
            <person name="Bersano T."/>
            <person name="Bono H."/>
            <person name="Chalk A.M."/>
            <person name="Chiu K.P."/>
            <person name="Choudhary V."/>
            <person name="Christoffels A."/>
            <person name="Clutterbuck D.R."/>
            <person name="Crowe M.L."/>
            <person name="Dalla E."/>
            <person name="Dalrymple B.P."/>
            <person name="de Bono B."/>
            <person name="Della Gatta G."/>
            <person name="di Bernardo D."/>
            <person name="Down T."/>
            <person name="Engstrom P."/>
            <person name="Fagiolini M."/>
            <person name="Faulkner G."/>
            <person name="Fletcher C.F."/>
            <person name="Fukushima T."/>
            <person name="Furuno M."/>
            <person name="Futaki S."/>
            <person name="Gariboldi M."/>
            <person name="Georgii-Hemming P."/>
            <person name="Gingeras T.R."/>
            <person name="Gojobori T."/>
            <person name="Green R.E."/>
            <person name="Gustincich S."/>
            <person name="Harbers M."/>
            <person name="Hayashi Y."/>
            <person name="Hensch T.K."/>
            <person name="Hirokawa N."/>
            <person name="Hill D."/>
            <person name="Huminiecki L."/>
            <person name="Iacono M."/>
            <person name="Ikeo K."/>
            <person name="Iwama A."/>
            <person name="Ishikawa T."/>
            <person name="Jakt M."/>
            <person name="Kanapin A."/>
            <person name="Katoh M."/>
            <person name="Kawasawa Y."/>
            <person name="Kelso J."/>
            <person name="Kitamura H."/>
            <person name="Kitano H."/>
            <person name="Kollias G."/>
            <person name="Krishnan S.P."/>
            <person name="Kruger A."/>
            <person name="Kummerfeld S.K."/>
            <person name="Kurochkin I.V."/>
            <person name="Lareau L.F."/>
            <person name="Lazarevic D."/>
            <person name="Lipovich L."/>
            <person name="Liu J."/>
            <person name="Liuni S."/>
            <person name="McWilliam S."/>
            <person name="Madan Babu M."/>
            <person name="Madera M."/>
            <person name="Marchionni L."/>
            <person name="Matsuda H."/>
            <person name="Matsuzawa S."/>
            <person name="Miki H."/>
            <person name="Mignone F."/>
            <person name="Miyake S."/>
            <person name="Morris K."/>
            <person name="Mottagui-Tabar S."/>
            <person name="Mulder N."/>
            <person name="Nakano N."/>
            <person name="Nakauchi H."/>
            <person name="Ng P."/>
            <person name="Nilsson R."/>
            <person name="Nishiguchi S."/>
            <person name="Nishikawa S."/>
            <person name="Nori F."/>
            <person name="Ohara O."/>
            <person name="Okazaki Y."/>
            <person name="Orlando V."/>
            <person name="Pang K.C."/>
            <person name="Pavan W.J."/>
            <person name="Pavesi G."/>
            <person name="Pesole G."/>
            <person name="Petrovsky N."/>
            <person name="Piazza S."/>
            <person name="Reed J."/>
            <person name="Reid J.F."/>
            <person name="Ring B.Z."/>
            <person name="Ringwald M."/>
            <person name="Rost B."/>
            <person name="Ruan Y."/>
            <person name="Salzberg S.L."/>
            <person name="Sandelin A."/>
            <person name="Schneider C."/>
            <person name="Schoenbach C."/>
            <person name="Sekiguchi K."/>
            <person name="Semple C.A."/>
            <person name="Seno S."/>
            <person name="Sessa L."/>
            <person name="Sheng Y."/>
            <person name="Shibata Y."/>
            <person name="Shimada H."/>
            <person name="Shimada K."/>
            <person name="Silva D."/>
            <person name="Sinclair B."/>
            <person name="Sperling S."/>
            <person name="Stupka E."/>
            <person name="Sugiura K."/>
            <person name="Sultana R."/>
            <person name="Takenaka Y."/>
            <person name="Taki K."/>
            <person name="Tammoja K."/>
            <person name="Tan S.L."/>
            <person name="Tang S."/>
            <person name="Taylor M.S."/>
            <person name="Tegner J."/>
            <person name="Teichmann S.A."/>
            <person name="Ueda H.R."/>
            <person name="van Nimwegen E."/>
            <person name="Verardo R."/>
            <person name="Wei C.L."/>
            <person name="Yagi K."/>
            <person name="Yamanishi H."/>
            <person name="Zabarovsky E."/>
            <person name="Zhu S."/>
            <person name="Zimmer A."/>
            <person name="Hide W."/>
            <person name="Bult C."/>
            <person name="Grimmond S.M."/>
            <person name="Teasdale R.D."/>
            <person name="Liu E.T."/>
            <person name="Brusic V."/>
            <person name="Quackenbush J."/>
            <person name="Wahlestedt C."/>
            <person name="Mattick J.S."/>
            <person name="Hume D.A."/>
            <person name="Kai C."/>
            <person name="Sasaki D."/>
            <person name="Tomaru Y."/>
            <person name="Fukuda S."/>
            <person name="Kanamori-Katayama M."/>
            <person name="Suzuki M."/>
            <person name="Aoki J."/>
            <person name="Arakawa T."/>
            <person name="Iida J."/>
            <person name="Imamura K."/>
            <person name="Itoh M."/>
            <person name="Kato T."/>
            <person name="Kawaji H."/>
            <person name="Kawagashira N."/>
            <person name="Kawashima T."/>
            <person name="Kojima M."/>
            <person name="Kondo S."/>
            <person name="Konno H."/>
            <person name="Nakano K."/>
            <person name="Ninomiya N."/>
            <person name="Nishio T."/>
            <person name="Okada M."/>
            <person name="Plessy C."/>
            <person name="Shibata K."/>
            <person name="Shiraki T."/>
            <person name="Suzuki S."/>
            <person name="Tagami M."/>
            <person name="Waki K."/>
            <person name="Watahiki A."/>
            <person name="Okamura-Oho Y."/>
            <person name="Suzuki H."/>
            <person name="Kawai J."/>
            <person name="Hayashizaki Y."/>
        </authorList>
    </citation>
    <scope>NUCLEOTIDE SEQUENCE [LARGE SCALE MRNA]</scope>
    <source>
        <strain>C57BL/6J</strain>
        <strain>DBA/2J</strain>
        <tissue>Cerebellum</tissue>
        <tissue>Kidney</tissue>
    </source>
</reference>
<reference key="2">
    <citation type="journal article" date="2004" name="Genome Res.">
        <title>The status, quality, and expansion of the NIH full-length cDNA project: the Mammalian Gene Collection (MGC).</title>
        <authorList>
            <consortium name="The MGC Project Team"/>
        </authorList>
    </citation>
    <scope>NUCLEOTIDE SEQUENCE [LARGE SCALE MRNA]</scope>
    <source>
        <strain>FVB/N</strain>
        <tissue>Brain</tissue>
        <tissue>Colon</tissue>
        <tissue>Thyroid</tissue>
    </source>
</reference>
<reference key="3">
    <citation type="submission" date="2007-03" db="UniProtKB">
        <authorList>
            <person name="Lubec G."/>
            <person name="Klug S."/>
        </authorList>
    </citation>
    <scope>PROTEIN SEQUENCE OF 134-144</scope>
    <scope>IDENTIFICATION BY MASS SPECTROMETRY</scope>
    <source>
        <tissue>Hippocampus</tissue>
    </source>
</reference>
<reference key="4">
    <citation type="journal article" date="2010" name="Cell">
        <title>A tissue-specific atlas of mouse protein phosphorylation and expression.</title>
        <authorList>
            <person name="Huttlin E.L."/>
            <person name="Jedrychowski M.P."/>
            <person name="Elias J.E."/>
            <person name="Goswami T."/>
            <person name="Rad R."/>
            <person name="Beausoleil S.A."/>
            <person name="Villen J."/>
            <person name="Haas W."/>
            <person name="Sowa M.E."/>
            <person name="Gygi S.P."/>
        </authorList>
    </citation>
    <scope>IDENTIFICATION BY MASS SPECTROMETRY [LARGE SCALE ANALYSIS]</scope>
    <source>
        <tissue>Brain</tissue>
        <tissue>Brown adipose tissue</tissue>
        <tissue>Kidney</tissue>
        <tissue>Liver</tissue>
        <tissue>Lung</tissue>
        <tissue>Pancreas</tissue>
        <tissue>Spleen</tissue>
        <tissue>Testis</tissue>
    </source>
</reference>
<reference key="5">
    <citation type="journal article" date="2014" name="J. Biol. Chem.">
        <title>Mouse myosin-19 is a plus-end-directed, high-duty ratio molecular motor.</title>
        <authorList>
            <person name="Lu Z."/>
            <person name="Ma X.N."/>
            <person name="Zhang H.M."/>
            <person name="Ji H.H."/>
            <person name="Ding H."/>
            <person name="Zhang J."/>
            <person name="Luo D."/>
            <person name="Sun Y."/>
            <person name="Li X.D."/>
        </authorList>
    </citation>
    <scope>IDENTIFICATION BY MASS SPECTROMETRY</scope>
    <scope>INTERACTION WITH MYO19</scope>
</reference>
<dbReference type="EMBL" id="AK002885">
    <property type="protein sequence ID" value="BAB22432.1"/>
    <property type="molecule type" value="mRNA"/>
</dbReference>
<dbReference type="EMBL" id="AK005133">
    <property type="protein sequence ID" value="BAB23832.1"/>
    <property type="molecule type" value="mRNA"/>
</dbReference>
<dbReference type="EMBL" id="AK146115">
    <property type="protein sequence ID" value="BAE26912.1"/>
    <property type="molecule type" value="mRNA"/>
</dbReference>
<dbReference type="EMBL" id="AK160123">
    <property type="protein sequence ID" value="BAE35646.1"/>
    <property type="status" value="ALT_FRAME"/>
    <property type="molecule type" value="mRNA"/>
</dbReference>
<dbReference type="EMBL" id="AK168316">
    <property type="protein sequence ID" value="BAE40255.1"/>
    <property type="molecule type" value="mRNA"/>
</dbReference>
<dbReference type="EMBL" id="BC028878">
    <property type="protein sequence ID" value="AAH28878.1"/>
    <property type="molecule type" value="mRNA"/>
</dbReference>
<dbReference type="EMBL" id="BC099425">
    <property type="protein sequence ID" value="AAH99425.1"/>
    <property type="molecule type" value="mRNA"/>
</dbReference>
<dbReference type="EMBL" id="BC131925">
    <property type="protein sequence ID" value="AAI31926.1"/>
    <property type="molecule type" value="mRNA"/>
</dbReference>
<dbReference type="EMBL" id="BC131927">
    <property type="protein sequence ID" value="AAI31928.1"/>
    <property type="molecule type" value="mRNA"/>
</dbReference>
<dbReference type="CCDS" id="CCDS28954.1"/>
<dbReference type="RefSeq" id="NP_075891.1">
    <property type="nucleotide sequence ID" value="NM_023402.2"/>
</dbReference>
<dbReference type="SMR" id="Q3THE2"/>
<dbReference type="BioGRID" id="212551">
    <property type="interactions" value="21"/>
</dbReference>
<dbReference type="DIP" id="DIP-31955N"/>
<dbReference type="FunCoup" id="Q3THE2">
    <property type="interactions" value="1552"/>
</dbReference>
<dbReference type="IntAct" id="Q3THE2">
    <property type="interactions" value="19"/>
</dbReference>
<dbReference type="MINT" id="Q3THE2"/>
<dbReference type="STRING" id="10090.ENSMUSP00000042364"/>
<dbReference type="GlyGen" id="Q3THE2">
    <property type="glycosylation" value="1 site, 1 O-linked glycan (1 site)"/>
</dbReference>
<dbReference type="iPTMnet" id="Q3THE2"/>
<dbReference type="MetOSite" id="Q3THE2"/>
<dbReference type="PhosphoSitePlus" id="Q3THE2"/>
<dbReference type="SwissPalm" id="Q3THE2"/>
<dbReference type="jPOST" id="Q3THE2"/>
<dbReference type="PaxDb" id="10090-ENSMUSP00000042364"/>
<dbReference type="PeptideAtlas" id="Q3THE2"/>
<dbReference type="ProteomicsDB" id="295679"/>
<dbReference type="Pumba" id="Q3THE2"/>
<dbReference type="TopDownProteomics" id="Q3THE2"/>
<dbReference type="DNASU" id="67938"/>
<dbReference type="Ensembl" id="ENSMUST00000038446.10">
    <property type="protein sequence ID" value="ENSMUSP00000042364.9"/>
    <property type="gene ID" value="ENSMUSG00000034868.10"/>
</dbReference>
<dbReference type="Ensembl" id="ENSMUST00000233004.2">
    <property type="protein sequence ID" value="ENSMUSP00000156763.2"/>
    <property type="gene ID" value="ENSMUSG00000034868.10"/>
</dbReference>
<dbReference type="Ensembl" id="ENSMUST00000233357.2">
    <property type="protein sequence ID" value="ENSMUSP00000156883.2"/>
    <property type="gene ID" value="ENSMUSG00000117098.2"/>
</dbReference>
<dbReference type="GeneID" id="67938"/>
<dbReference type="KEGG" id="mmu:67938"/>
<dbReference type="UCSC" id="uc008dlv.1">
    <property type="organism name" value="mouse"/>
</dbReference>
<dbReference type="AGR" id="MGI:107494"/>
<dbReference type="CTD" id="103910"/>
<dbReference type="MGI" id="MGI:107494">
    <property type="gene designation" value="Myl12b"/>
</dbReference>
<dbReference type="VEuPathDB" id="HostDB:ENSMUSG00000034868"/>
<dbReference type="VEuPathDB" id="HostDB:ENSMUSG00000117098"/>
<dbReference type="eggNOG" id="KOG0031">
    <property type="taxonomic scope" value="Eukaryota"/>
</dbReference>
<dbReference type="GeneTree" id="ENSGT00940000153607"/>
<dbReference type="HOGENOM" id="CLU_061288_9_3_1"/>
<dbReference type="InParanoid" id="Q3THE2"/>
<dbReference type="OMA" id="WIPEDYL"/>
<dbReference type="OrthoDB" id="9571582at2759"/>
<dbReference type="PhylomeDB" id="Q3THE2"/>
<dbReference type="TreeFam" id="TF314218"/>
<dbReference type="Reactome" id="R-MMU-445355">
    <property type="pathway name" value="Smooth Muscle Contraction"/>
</dbReference>
<dbReference type="Reactome" id="R-MMU-5627123">
    <property type="pathway name" value="RHO GTPases activate PAKs"/>
</dbReference>
<dbReference type="BioGRID-ORCS" id="67938">
    <property type="hits" value="8 hits in 78 CRISPR screens"/>
</dbReference>
<dbReference type="CD-CODE" id="CE726F99">
    <property type="entry name" value="Postsynaptic density"/>
</dbReference>
<dbReference type="ChiTaRS" id="Myl12b">
    <property type="organism name" value="mouse"/>
</dbReference>
<dbReference type="PRO" id="PR:Q3THE2"/>
<dbReference type="Proteomes" id="UP000000589">
    <property type="component" value="Chromosome 17"/>
</dbReference>
<dbReference type="RNAct" id="Q3THE2">
    <property type="molecule type" value="protein"/>
</dbReference>
<dbReference type="Bgee" id="ENSMUSG00000034868">
    <property type="expression patterns" value="Expressed in granulocyte and 111 other cell types or tissues"/>
</dbReference>
<dbReference type="ExpressionAtlas" id="Q3THE2">
    <property type="expression patterns" value="baseline and differential"/>
</dbReference>
<dbReference type="GO" id="GO:0045177">
    <property type="term" value="C:apical part of cell"/>
    <property type="evidence" value="ECO:0000314"/>
    <property type="project" value="MGI"/>
</dbReference>
<dbReference type="GO" id="GO:0005903">
    <property type="term" value="C:brush border"/>
    <property type="evidence" value="ECO:0000314"/>
    <property type="project" value="UniProtKB"/>
</dbReference>
<dbReference type="GO" id="GO:0005938">
    <property type="term" value="C:cell cortex"/>
    <property type="evidence" value="ECO:0000250"/>
    <property type="project" value="UniProtKB"/>
</dbReference>
<dbReference type="GO" id="GO:0016460">
    <property type="term" value="C:myosin II complex"/>
    <property type="evidence" value="ECO:0000314"/>
    <property type="project" value="MGI"/>
</dbReference>
<dbReference type="GO" id="GO:0001725">
    <property type="term" value="C:stress fiber"/>
    <property type="evidence" value="ECO:0000314"/>
    <property type="project" value="MGI"/>
</dbReference>
<dbReference type="GO" id="GO:0030018">
    <property type="term" value="C:Z disc"/>
    <property type="evidence" value="ECO:0000314"/>
    <property type="project" value="MGI"/>
</dbReference>
<dbReference type="GO" id="GO:0005509">
    <property type="term" value="F:calcium ion binding"/>
    <property type="evidence" value="ECO:0007669"/>
    <property type="project" value="InterPro"/>
</dbReference>
<dbReference type="GO" id="GO:0032036">
    <property type="term" value="F:myosin heavy chain binding"/>
    <property type="evidence" value="ECO:0000353"/>
    <property type="project" value="MGI"/>
</dbReference>
<dbReference type="GO" id="GO:0008360">
    <property type="term" value="P:regulation of cell shape"/>
    <property type="evidence" value="ECO:0000315"/>
    <property type="project" value="MGI"/>
</dbReference>
<dbReference type="CDD" id="cd00051">
    <property type="entry name" value="EFh"/>
    <property type="match status" value="1"/>
</dbReference>
<dbReference type="FunFam" id="1.10.238.10:FF:000010">
    <property type="entry name" value="Myosin regulatory light chain 2, atrial isoform"/>
    <property type="match status" value="1"/>
</dbReference>
<dbReference type="FunFam" id="1.10.238.10:FF:000007">
    <property type="entry name" value="Putative myosin regulatory light chain sqh"/>
    <property type="match status" value="1"/>
</dbReference>
<dbReference type="Gene3D" id="1.10.238.10">
    <property type="entry name" value="EF-hand"/>
    <property type="match status" value="2"/>
</dbReference>
<dbReference type="InterPro" id="IPR011992">
    <property type="entry name" value="EF-hand-dom_pair"/>
</dbReference>
<dbReference type="InterPro" id="IPR018247">
    <property type="entry name" value="EF_Hand_1_Ca_BS"/>
</dbReference>
<dbReference type="InterPro" id="IPR015070">
    <property type="entry name" value="EF_hand_DJBP"/>
</dbReference>
<dbReference type="InterPro" id="IPR002048">
    <property type="entry name" value="EF_hand_dom"/>
</dbReference>
<dbReference type="InterPro" id="IPR050403">
    <property type="entry name" value="Myosin_RLC"/>
</dbReference>
<dbReference type="PANTHER" id="PTHR23049">
    <property type="entry name" value="MYOSIN REGULATORY LIGHT CHAIN 2"/>
    <property type="match status" value="1"/>
</dbReference>
<dbReference type="Pfam" id="PF08976">
    <property type="entry name" value="EF-hand_11"/>
    <property type="match status" value="1"/>
</dbReference>
<dbReference type="Pfam" id="PF13499">
    <property type="entry name" value="EF-hand_7"/>
    <property type="match status" value="1"/>
</dbReference>
<dbReference type="SMART" id="SM00054">
    <property type="entry name" value="EFh"/>
    <property type="match status" value="2"/>
</dbReference>
<dbReference type="SUPFAM" id="SSF47473">
    <property type="entry name" value="EF-hand"/>
    <property type="match status" value="1"/>
</dbReference>
<dbReference type="PROSITE" id="PS00018">
    <property type="entry name" value="EF_HAND_1"/>
    <property type="match status" value="1"/>
</dbReference>
<dbReference type="PROSITE" id="PS50222">
    <property type="entry name" value="EF_HAND_2"/>
    <property type="match status" value="3"/>
</dbReference>
<organism>
    <name type="scientific">Mus musculus</name>
    <name type="common">Mouse</name>
    <dbReference type="NCBI Taxonomy" id="10090"/>
    <lineage>
        <taxon>Eukaryota</taxon>
        <taxon>Metazoa</taxon>
        <taxon>Chordata</taxon>
        <taxon>Craniata</taxon>
        <taxon>Vertebrata</taxon>
        <taxon>Euteleostomi</taxon>
        <taxon>Mammalia</taxon>
        <taxon>Eutheria</taxon>
        <taxon>Euarchontoglires</taxon>
        <taxon>Glires</taxon>
        <taxon>Rodentia</taxon>
        <taxon>Myomorpha</taxon>
        <taxon>Muroidea</taxon>
        <taxon>Muridae</taxon>
        <taxon>Murinae</taxon>
        <taxon>Mus</taxon>
        <taxon>Mus</taxon>
    </lineage>
</organism>